<keyword id="KW-0687">Ribonucleoprotein</keyword>
<keyword id="KW-0689">Ribosomal protein</keyword>
<keyword id="KW-0694">RNA-binding</keyword>
<keyword id="KW-0699">rRNA-binding</keyword>
<gene>
    <name evidence="1" type="primary">rplD</name>
    <name type="ordered locus">Mrad2831_2219</name>
</gene>
<accession>B1LWS7</accession>
<name>RL4_METRJ</name>
<reference key="1">
    <citation type="submission" date="2008-03" db="EMBL/GenBank/DDBJ databases">
        <title>Complete sequence of chromosome of Methylobacterium radiotolerans JCM 2831.</title>
        <authorList>
            <consortium name="US DOE Joint Genome Institute"/>
            <person name="Copeland A."/>
            <person name="Lucas S."/>
            <person name="Lapidus A."/>
            <person name="Glavina del Rio T."/>
            <person name="Dalin E."/>
            <person name="Tice H."/>
            <person name="Bruce D."/>
            <person name="Goodwin L."/>
            <person name="Pitluck S."/>
            <person name="Kiss H."/>
            <person name="Brettin T."/>
            <person name="Detter J.C."/>
            <person name="Han C."/>
            <person name="Kuske C.R."/>
            <person name="Schmutz J."/>
            <person name="Larimer F."/>
            <person name="Land M."/>
            <person name="Hauser L."/>
            <person name="Kyrpides N."/>
            <person name="Mikhailova N."/>
            <person name="Marx C.J."/>
            <person name="Richardson P."/>
        </authorList>
    </citation>
    <scope>NUCLEOTIDE SEQUENCE [LARGE SCALE GENOMIC DNA]</scope>
    <source>
        <strain>ATCC 27329 / DSM 1819 / JCM 2831 / NBRC 15690 / NCIMB 10815 / 0-1</strain>
    </source>
</reference>
<organism>
    <name type="scientific">Methylobacterium radiotolerans (strain ATCC 27329 / DSM 1819 / JCM 2831 / NBRC 15690 / NCIMB 10815 / 0-1)</name>
    <dbReference type="NCBI Taxonomy" id="426355"/>
    <lineage>
        <taxon>Bacteria</taxon>
        <taxon>Pseudomonadati</taxon>
        <taxon>Pseudomonadota</taxon>
        <taxon>Alphaproteobacteria</taxon>
        <taxon>Hyphomicrobiales</taxon>
        <taxon>Methylobacteriaceae</taxon>
        <taxon>Methylobacterium</taxon>
    </lineage>
</organism>
<dbReference type="EMBL" id="CP001001">
    <property type="protein sequence ID" value="ACB24214.1"/>
    <property type="molecule type" value="Genomic_DNA"/>
</dbReference>
<dbReference type="RefSeq" id="WP_012319187.1">
    <property type="nucleotide sequence ID" value="NC_010505.1"/>
</dbReference>
<dbReference type="SMR" id="B1LWS7"/>
<dbReference type="STRING" id="426355.Mrad2831_2219"/>
<dbReference type="GeneID" id="6138251"/>
<dbReference type="KEGG" id="mrd:Mrad2831_2219"/>
<dbReference type="eggNOG" id="COG0088">
    <property type="taxonomic scope" value="Bacteria"/>
</dbReference>
<dbReference type="HOGENOM" id="CLU_041575_5_1_5"/>
<dbReference type="OrthoDB" id="9803201at2"/>
<dbReference type="Proteomes" id="UP000006589">
    <property type="component" value="Chromosome"/>
</dbReference>
<dbReference type="GO" id="GO:1990904">
    <property type="term" value="C:ribonucleoprotein complex"/>
    <property type="evidence" value="ECO:0007669"/>
    <property type="project" value="UniProtKB-KW"/>
</dbReference>
<dbReference type="GO" id="GO:0005840">
    <property type="term" value="C:ribosome"/>
    <property type="evidence" value="ECO:0007669"/>
    <property type="project" value="UniProtKB-KW"/>
</dbReference>
<dbReference type="GO" id="GO:0019843">
    <property type="term" value="F:rRNA binding"/>
    <property type="evidence" value="ECO:0007669"/>
    <property type="project" value="UniProtKB-UniRule"/>
</dbReference>
<dbReference type="GO" id="GO:0003735">
    <property type="term" value="F:structural constituent of ribosome"/>
    <property type="evidence" value="ECO:0007669"/>
    <property type="project" value="InterPro"/>
</dbReference>
<dbReference type="GO" id="GO:0006412">
    <property type="term" value="P:translation"/>
    <property type="evidence" value="ECO:0007669"/>
    <property type="project" value="UniProtKB-UniRule"/>
</dbReference>
<dbReference type="Gene3D" id="3.40.1370.10">
    <property type="match status" value="1"/>
</dbReference>
<dbReference type="HAMAP" id="MF_01328_B">
    <property type="entry name" value="Ribosomal_uL4_B"/>
    <property type="match status" value="1"/>
</dbReference>
<dbReference type="InterPro" id="IPR002136">
    <property type="entry name" value="Ribosomal_uL4"/>
</dbReference>
<dbReference type="InterPro" id="IPR013005">
    <property type="entry name" value="Ribosomal_uL4-like"/>
</dbReference>
<dbReference type="InterPro" id="IPR023574">
    <property type="entry name" value="Ribosomal_uL4_dom_sf"/>
</dbReference>
<dbReference type="NCBIfam" id="TIGR03953">
    <property type="entry name" value="rplD_bact"/>
    <property type="match status" value="1"/>
</dbReference>
<dbReference type="PANTHER" id="PTHR10746">
    <property type="entry name" value="50S RIBOSOMAL PROTEIN L4"/>
    <property type="match status" value="1"/>
</dbReference>
<dbReference type="PANTHER" id="PTHR10746:SF6">
    <property type="entry name" value="LARGE RIBOSOMAL SUBUNIT PROTEIN UL4M"/>
    <property type="match status" value="1"/>
</dbReference>
<dbReference type="Pfam" id="PF00573">
    <property type="entry name" value="Ribosomal_L4"/>
    <property type="match status" value="1"/>
</dbReference>
<dbReference type="SUPFAM" id="SSF52166">
    <property type="entry name" value="Ribosomal protein L4"/>
    <property type="match status" value="1"/>
</dbReference>
<sequence length="206" mass="22600">MKLDIKTLDGAGAGSVELNEEIFGLEPRADLLQRMVRWQLAKRRAGTHAVQNRSDVNRTRKKLYKQKGTGNARHGAASAPQFRGGGRAFGPVVRDHSHDLPKKVRALALRHALSSKAKASTLIVVDDIKIEDHKTKGLIERFGKMGLSNALIIGGAEVDVNFGRAARAIPQIDVLPVQGINVYDILRRDTLVLTKAAVDALEERFK</sequence>
<proteinExistence type="inferred from homology"/>
<protein>
    <recommendedName>
        <fullName evidence="1">Large ribosomal subunit protein uL4</fullName>
    </recommendedName>
    <alternativeName>
        <fullName evidence="2">50S ribosomal protein L4</fullName>
    </alternativeName>
</protein>
<feature type="chain" id="PRO_1000142154" description="Large ribosomal subunit protein uL4">
    <location>
        <begin position="1"/>
        <end position="206"/>
    </location>
</feature>
<comment type="function">
    <text evidence="1">One of the primary rRNA binding proteins, this protein initially binds near the 5'-end of the 23S rRNA. It is important during the early stages of 50S assembly. It makes multiple contacts with different domains of the 23S rRNA in the assembled 50S subunit and ribosome.</text>
</comment>
<comment type="function">
    <text evidence="1">Forms part of the polypeptide exit tunnel.</text>
</comment>
<comment type="subunit">
    <text evidence="1">Part of the 50S ribosomal subunit.</text>
</comment>
<comment type="similarity">
    <text evidence="1">Belongs to the universal ribosomal protein uL4 family.</text>
</comment>
<evidence type="ECO:0000255" key="1">
    <source>
        <dbReference type="HAMAP-Rule" id="MF_01328"/>
    </source>
</evidence>
<evidence type="ECO:0000305" key="2"/>